<protein>
    <recommendedName>
        <fullName evidence="1">Tyrosine--tRNA ligase 2</fullName>
        <ecNumber evidence="1">6.1.1.1</ecNumber>
    </recommendedName>
    <alternativeName>
        <fullName evidence="1">Tyrosyl-tRNA synthetase 2</fullName>
        <shortName evidence="1">TyrRS 2</shortName>
    </alternativeName>
</protein>
<gene>
    <name evidence="1" type="primary">tyrS2</name>
    <name type="ordered locus">VP2470</name>
</gene>
<evidence type="ECO:0000255" key="1">
    <source>
        <dbReference type="HAMAP-Rule" id="MF_02007"/>
    </source>
</evidence>
<reference key="1">
    <citation type="journal article" date="2003" name="Lancet">
        <title>Genome sequence of Vibrio parahaemolyticus: a pathogenic mechanism distinct from that of V. cholerae.</title>
        <authorList>
            <person name="Makino K."/>
            <person name="Oshima K."/>
            <person name="Kurokawa K."/>
            <person name="Yokoyama K."/>
            <person name="Uda T."/>
            <person name="Tagomori K."/>
            <person name="Iijima Y."/>
            <person name="Najima M."/>
            <person name="Nakano M."/>
            <person name="Yamashita A."/>
            <person name="Kubota Y."/>
            <person name="Kimura S."/>
            <person name="Yasunaga T."/>
            <person name="Honda T."/>
            <person name="Shinagawa H."/>
            <person name="Hattori M."/>
            <person name="Iida T."/>
        </authorList>
    </citation>
    <scope>NUCLEOTIDE SEQUENCE [LARGE SCALE GENOMIC DNA]</scope>
    <source>
        <strain>RIMD 2210633</strain>
    </source>
</reference>
<proteinExistence type="inferred from homology"/>
<comment type="function">
    <text evidence="1">Catalyzes the attachment of tyrosine to tRNA(Tyr) in a two-step reaction: tyrosine is first activated by ATP to form Tyr-AMP and then transferred to the acceptor end of tRNA(Tyr).</text>
</comment>
<comment type="catalytic activity">
    <reaction evidence="1">
        <text>tRNA(Tyr) + L-tyrosine + ATP = L-tyrosyl-tRNA(Tyr) + AMP + diphosphate + H(+)</text>
        <dbReference type="Rhea" id="RHEA:10220"/>
        <dbReference type="Rhea" id="RHEA-COMP:9706"/>
        <dbReference type="Rhea" id="RHEA-COMP:9707"/>
        <dbReference type="ChEBI" id="CHEBI:15378"/>
        <dbReference type="ChEBI" id="CHEBI:30616"/>
        <dbReference type="ChEBI" id="CHEBI:33019"/>
        <dbReference type="ChEBI" id="CHEBI:58315"/>
        <dbReference type="ChEBI" id="CHEBI:78442"/>
        <dbReference type="ChEBI" id="CHEBI:78536"/>
        <dbReference type="ChEBI" id="CHEBI:456215"/>
        <dbReference type="EC" id="6.1.1.1"/>
    </reaction>
</comment>
<comment type="subunit">
    <text evidence="1">Homodimer.</text>
</comment>
<comment type="subcellular location">
    <subcellularLocation>
        <location evidence="1">Cytoplasm</location>
    </subcellularLocation>
</comment>
<comment type="similarity">
    <text evidence="1">Belongs to the class-I aminoacyl-tRNA synthetase family. TyrS type 2 subfamily.</text>
</comment>
<feature type="chain" id="PRO_0000236777" description="Tyrosine--tRNA ligase 2">
    <location>
        <begin position="1"/>
        <end position="395"/>
    </location>
</feature>
<feature type="domain" description="S4 RNA-binding" evidence="1">
    <location>
        <begin position="334"/>
        <end position="394"/>
    </location>
</feature>
<feature type="short sequence motif" description="'HIGH' region">
    <location>
        <begin position="42"/>
        <end position="51"/>
    </location>
</feature>
<feature type="short sequence motif" description="'KMSKS' region">
    <location>
        <begin position="226"/>
        <end position="230"/>
    </location>
</feature>
<feature type="binding site" evidence="1">
    <location>
        <position position="229"/>
    </location>
    <ligand>
        <name>ATP</name>
        <dbReference type="ChEBI" id="CHEBI:30616"/>
    </ligand>
</feature>
<organism>
    <name type="scientific">Vibrio parahaemolyticus serotype O3:K6 (strain RIMD 2210633)</name>
    <dbReference type="NCBI Taxonomy" id="223926"/>
    <lineage>
        <taxon>Bacteria</taxon>
        <taxon>Pseudomonadati</taxon>
        <taxon>Pseudomonadota</taxon>
        <taxon>Gammaproteobacteria</taxon>
        <taxon>Vibrionales</taxon>
        <taxon>Vibrionaceae</taxon>
        <taxon>Vibrio</taxon>
    </lineage>
</organism>
<dbReference type="EC" id="6.1.1.1" evidence="1"/>
<dbReference type="EMBL" id="BA000031">
    <property type="protein sequence ID" value="BAC60733.1"/>
    <property type="molecule type" value="Genomic_DNA"/>
</dbReference>
<dbReference type="RefSeq" id="NP_798849.1">
    <property type="nucleotide sequence ID" value="NC_004603.1"/>
</dbReference>
<dbReference type="SMR" id="Q87LY8"/>
<dbReference type="GeneID" id="1189985"/>
<dbReference type="KEGG" id="vpa:VP2470"/>
<dbReference type="PATRIC" id="fig|223926.6.peg.2370"/>
<dbReference type="eggNOG" id="COG0162">
    <property type="taxonomic scope" value="Bacteria"/>
</dbReference>
<dbReference type="HOGENOM" id="CLU_024003_5_0_6"/>
<dbReference type="Proteomes" id="UP000002493">
    <property type="component" value="Chromosome 1"/>
</dbReference>
<dbReference type="GO" id="GO:0005829">
    <property type="term" value="C:cytosol"/>
    <property type="evidence" value="ECO:0007669"/>
    <property type="project" value="TreeGrafter"/>
</dbReference>
<dbReference type="GO" id="GO:0005524">
    <property type="term" value="F:ATP binding"/>
    <property type="evidence" value="ECO:0007669"/>
    <property type="project" value="UniProtKB-UniRule"/>
</dbReference>
<dbReference type="GO" id="GO:0003723">
    <property type="term" value="F:RNA binding"/>
    <property type="evidence" value="ECO:0007669"/>
    <property type="project" value="UniProtKB-KW"/>
</dbReference>
<dbReference type="GO" id="GO:0004831">
    <property type="term" value="F:tyrosine-tRNA ligase activity"/>
    <property type="evidence" value="ECO:0007669"/>
    <property type="project" value="UniProtKB-UniRule"/>
</dbReference>
<dbReference type="GO" id="GO:0006437">
    <property type="term" value="P:tyrosyl-tRNA aminoacylation"/>
    <property type="evidence" value="ECO:0007669"/>
    <property type="project" value="UniProtKB-UniRule"/>
</dbReference>
<dbReference type="CDD" id="cd00165">
    <property type="entry name" value="S4"/>
    <property type="match status" value="1"/>
</dbReference>
<dbReference type="CDD" id="cd00805">
    <property type="entry name" value="TyrRS_core"/>
    <property type="match status" value="1"/>
</dbReference>
<dbReference type="FunFam" id="1.10.240.10:FF:000006">
    <property type="entry name" value="Tyrosine--tRNA ligase"/>
    <property type="match status" value="1"/>
</dbReference>
<dbReference type="FunFam" id="3.10.290.10:FF:000022">
    <property type="entry name" value="Tyrosine--tRNA ligase"/>
    <property type="match status" value="1"/>
</dbReference>
<dbReference type="FunFam" id="3.40.50.620:FF:000061">
    <property type="entry name" value="Tyrosine--tRNA ligase"/>
    <property type="match status" value="1"/>
</dbReference>
<dbReference type="Gene3D" id="3.40.50.620">
    <property type="entry name" value="HUPs"/>
    <property type="match status" value="1"/>
</dbReference>
<dbReference type="Gene3D" id="3.10.290.10">
    <property type="entry name" value="RNA-binding S4 domain"/>
    <property type="match status" value="1"/>
</dbReference>
<dbReference type="Gene3D" id="1.10.240.10">
    <property type="entry name" value="Tyrosyl-Transfer RNA Synthetase"/>
    <property type="match status" value="1"/>
</dbReference>
<dbReference type="HAMAP" id="MF_02007">
    <property type="entry name" value="Tyr_tRNA_synth_type2"/>
    <property type="match status" value="1"/>
</dbReference>
<dbReference type="InterPro" id="IPR001412">
    <property type="entry name" value="aa-tRNA-synth_I_CS"/>
</dbReference>
<dbReference type="InterPro" id="IPR002305">
    <property type="entry name" value="aa-tRNA-synth_Ic"/>
</dbReference>
<dbReference type="InterPro" id="IPR014729">
    <property type="entry name" value="Rossmann-like_a/b/a_fold"/>
</dbReference>
<dbReference type="InterPro" id="IPR036986">
    <property type="entry name" value="S4_RNA-bd_sf"/>
</dbReference>
<dbReference type="InterPro" id="IPR002307">
    <property type="entry name" value="Tyr-tRNA-ligase"/>
</dbReference>
<dbReference type="InterPro" id="IPR024088">
    <property type="entry name" value="Tyr-tRNA-ligase_bac-type"/>
</dbReference>
<dbReference type="InterPro" id="IPR024108">
    <property type="entry name" value="Tyr-tRNA-ligase_bac_2"/>
</dbReference>
<dbReference type="NCBIfam" id="TIGR00234">
    <property type="entry name" value="tyrS"/>
    <property type="match status" value="1"/>
</dbReference>
<dbReference type="PANTHER" id="PTHR11766:SF1">
    <property type="entry name" value="TYROSINE--TRNA LIGASE"/>
    <property type="match status" value="1"/>
</dbReference>
<dbReference type="PANTHER" id="PTHR11766">
    <property type="entry name" value="TYROSYL-TRNA SYNTHETASE"/>
    <property type="match status" value="1"/>
</dbReference>
<dbReference type="Pfam" id="PF00579">
    <property type="entry name" value="tRNA-synt_1b"/>
    <property type="match status" value="1"/>
</dbReference>
<dbReference type="PRINTS" id="PR01040">
    <property type="entry name" value="TRNASYNTHTYR"/>
</dbReference>
<dbReference type="SUPFAM" id="SSF55174">
    <property type="entry name" value="Alpha-L RNA-binding motif"/>
    <property type="match status" value="1"/>
</dbReference>
<dbReference type="SUPFAM" id="SSF52374">
    <property type="entry name" value="Nucleotidylyl transferase"/>
    <property type="match status" value="1"/>
</dbReference>
<dbReference type="PROSITE" id="PS00178">
    <property type="entry name" value="AA_TRNA_LIGASE_I"/>
    <property type="match status" value="1"/>
</dbReference>
<dbReference type="PROSITE" id="PS50889">
    <property type="entry name" value="S4"/>
    <property type="match status" value="1"/>
</dbReference>
<keyword id="KW-0030">Aminoacyl-tRNA synthetase</keyword>
<keyword id="KW-0067">ATP-binding</keyword>
<keyword id="KW-0963">Cytoplasm</keyword>
<keyword id="KW-0436">Ligase</keyword>
<keyword id="KW-0547">Nucleotide-binding</keyword>
<keyword id="KW-0648">Protein biosynthesis</keyword>
<keyword id="KW-0694">RNA-binding</keyword>
<sequence length="395" mass="44041">MASIEAALAEIKRGVEELIPEEELIAKLKEGRPLRIKLGADPTAPDIHLGHTVIFNKLRLFQELGHEVTFLIGDFTAMVGDPTGKNTTRPPLSREDVLRNAETYKEQVFKILDPAKTKIQFNSEWLSELGAEGMIRLAANQTVARMLERDDFKKRYAGGQPIAIHEFMYPLLQGWDSVAMETDVELGGTDQKFNLLMGRELQKSHGQKPQVVLMMPLLVGLDGEKKMSKSAGNYIGISEAPSEMFGKIMSISDDLMWSYYELLSFRPLEEIEQFKADVQAGKNPRDIKVLLAKEIIARFHSEADADAAEQEFVNRFAKNQIPDEMPEFDFDAGTPVANLLKDAGLCASTSEAMRMVKQGAAKVEGEKVADAKFAPEAGTYVFQVGKRKFARITIK</sequence>
<name>SYY2_VIBPA</name>
<accession>Q87LY8</accession>